<gene>
    <name type="primary">bimE</name>
    <name type="ORF">AN2772</name>
</gene>
<comment type="function">
    <text>Negative regulator of mitosis in E.nidulans. This protein is part of a regulatory pathway that includes the nimA protein kinase. It is required to prevent premature entry into mitosis. Mutations to this protein both cause cells to enter mitosis and prevent them from leaving mitosis.</text>
</comment>
<comment type="similarity">
    <text evidence="3">Belongs to the APC1 family.</text>
</comment>
<comment type="sequence caution" evidence="3">
    <conflict type="erroneous initiation">
        <sequence resource="EMBL-CDS" id="AAA51478"/>
    </conflict>
    <text>Extended N-terminus.</text>
</comment>
<comment type="sequence caution" evidence="3">
    <conflict type="frameshift">
        <sequence resource="EMBL-CDS" id="CBF84043"/>
    </conflict>
</comment>
<comment type="sequence caution" evidence="3">
    <conflict type="frameshift">
        <sequence resource="EMBL-CDS" id="EAA63206"/>
    </conflict>
</comment>
<protein>
    <recommendedName>
        <fullName>Negative regulator of mitosis</fullName>
    </recommendedName>
    <alternativeName>
        <fullName>Anaphase-promoting complex subunit 1</fullName>
    </alternativeName>
</protein>
<sequence length="2067" mass="228577">MSTVRSLGLHDSSAISFLIAEDLLPAEPSEELYSWTTSINNGPNGPVEDELVWTKSCVVWTRAGVIKRVFRLDFEKEDIKYALLTNFAVNNVKRTSDLSSLAIPQTTSQQSNRPSGSESLDGKESRRSSTSKHSSRAVVVVLKTQAHIFFLEGNSHVVPLPFEVDSVFATPRGLLFQRKVADESNTSSYPMVPPNSFMSFSQDFCASQFLDYTSGKVQRPSLSTIPAQSPSWKSRPNKRADLPRVFSLMDPHSEMGLVVTNQASRWLHTSLSGRPSGFDVLDPADEIVYVSPRDELAGTFRADPKSPLILVLTVNTITGLYTLWTARYRDNESIPSHRKKKRRDTGGTRSKRRSSHFGMATGTTTPGARPSAGRESFGPRGDNWNASVMSHSQYSTEGRPDDDEDDFASKLGQDFGEIGVPSKTSRRVSSMLARADLATSQDRITFSDLVTGSQSSTIHPGGLRQSIGAGSTRGSFGFNPRSSLPPGAGSIYSTTSSFVDPPVDKLLEELNNESLFEGIENMDLKESAAGLPEEVFLSKVESFSSKFSGSFLAPSKIKSSKRLKVVTLCPTDYASSHVGESTSMALYLVDQEAKSLTVVNIRVESVKKPAKDVVFLKRSKNKATSDERALLVQASGIQHVSGTLDVCKVVDGGLSRIITLSVNDAGATVLHLQMPWNDPIIIELPSKFMLHEMDALSSIMTVNTSREGSVNRVMADFSMTMTGLDHPAVDGKFDVVDSAKRRHKLQLCMEPTNPLVRRAFGVCRFALCGYFPDKVADGLLMGWWKTLKWLQEREVCENDLEWTALVVTLFAQAIPFIEGDQSGGTTRLTRRKRGLLRSSSGSYVDTESWESMLEQESGSAGVVASWMNTASWGWVVEQDAEDESTASYGRKPNKEPLSSSRSTCRKNTYLLRCATLTREFLRTPQGIAAVGCDGHLRKALSNSEHSIHTPLCTILVALHLLREEQKLSACDEEQSHKTLGLLAPVLAQLGGWLGWPSWNWAEDSYYGSEIASINRWQFENTRMAGPDLPAEPLPPPSIFAYLEKAWRGESCQFWTLLNLVNFDGHPRRGRLWQWCSTLTPRTLALEGFVSEMRHKLSVLERIQLLHRWGLTRSVIETFPAGISTPLYEAIIESQTHASTSWSSSFLGLIDRDDLNISSQSSTTRPPPPLSLNVSHDAIRDYHQISNSTLDIDAINSFEASAEADRFSVTRLIFREDKRFIEAARLLNQSKAPAAECHPEPEWTDSDLLEAQKEVVQLVTLRTLSIPTGRAMLAFSGRLPLLTEKLPIPSFSLQCVMKPSNVTISADRASFHEEKICWAFFHNGVSTGLAISKNSKGIDTSWILFNKPQELTNRHAGFLLALGLNGHLRSLAKWVAFKYLTPKHTMTSIGLLLGLSASYLGTMDTLVTRLLSVHVTRMLPMGAAELNLSPLTQTAGIMGIGLLYCNSQHRRMSEVMLSEIENADQEEGSATNDYLRNEGYRLAAGFALGFINLGKGKDLKGMRDMHIVERLLAVAVGTKNVDLAHVLDRATAGATIALAIIFMKTNDETLAQKVDIPDTTVRFDYVRPDLFLLRTLARHIIMWDRIQACDEWFIGSLPEVYRRRYRLTGVRRLKSNDMPFFNIIAGLCFALGLRFAGSPDPTVRDILLSYLDQFIRISRLPAPNYDARLARNSVRHCQDVVALSLAAVMAGTGDLALFRRLRSLHGRVDPDTPYGSHMAAHMAIGMLFLGGGSYTLGTSNLAVASLICSLYPIFPTTVLDNECHLQAFRHLWVLAAEPRCIVPRDLDSRRPISMPITVTDSDGVSGTLTAPCLLPDLNRIAKVEVLSPDYWPLVLDFDSNPGVREKFQQGDQSIYLRRKATYNPTGSSFFSSTLAGLSSAQDILPSASTSASNQGKGLSPSALPNVSALLSKESHRFTPKPAAQSIWDWIFQLDSLHGILDAREKELVLPSSFPARPRPSSTPHDAPWLRQSAVDSKLLAESIAQNVIQSATGRGGNPDEVRDRLWQLRLLFAWIDAGSSFPSESDEEKRDRQETGSMPSSGHWLRRDYVEDLRWKIWGVQARGSEGS</sequence>
<evidence type="ECO:0000255" key="1"/>
<evidence type="ECO:0000256" key="2">
    <source>
        <dbReference type="SAM" id="MobiDB-lite"/>
    </source>
</evidence>
<evidence type="ECO:0000305" key="3"/>
<dbReference type="EMBL" id="M59705">
    <property type="protein sequence ID" value="AAA51478.1"/>
    <property type="status" value="ALT_INIT"/>
    <property type="molecule type" value="mRNA"/>
</dbReference>
<dbReference type="EMBL" id="AACD01000049">
    <property type="protein sequence ID" value="EAA63206.1"/>
    <property type="status" value="ALT_FRAME"/>
    <property type="molecule type" value="Genomic_DNA"/>
</dbReference>
<dbReference type="EMBL" id="BN001306">
    <property type="protein sequence ID" value="CBF84043.1"/>
    <property type="status" value="ALT_FRAME"/>
    <property type="molecule type" value="Genomic_DNA"/>
</dbReference>
<dbReference type="PIR" id="A37879">
    <property type="entry name" value="BWASBE"/>
</dbReference>
<dbReference type="RefSeq" id="XP_660376.1">
    <property type="nucleotide sequence ID" value="XM_655284.1"/>
</dbReference>
<dbReference type="SMR" id="P24686"/>
<dbReference type="STRING" id="227321.P24686"/>
<dbReference type="KEGG" id="ani:ANIA_02772"/>
<dbReference type="eggNOG" id="KOG1858">
    <property type="taxonomic scope" value="Eukaryota"/>
</dbReference>
<dbReference type="HOGENOM" id="CLU_000746_0_0_1"/>
<dbReference type="InParanoid" id="P24686"/>
<dbReference type="OrthoDB" id="26401at2759"/>
<dbReference type="Proteomes" id="UP000000560">
    <property type="component" value="Chromosome VI"/>
</dbReference>
<dbReference type="GO" id="GO:0005680">
    <property type="term" value="C:anaphase-promoting complex"/>
    <property type="evidence" value="ECO:0000318"/>
    <property type="project" value="GO_Central"/>
</dbReference>
<dbReference type="GO" id="GO:0060090">
    <property type="term" value="F:molecular adaptor activity"/>
    <property type="evidence" value="ECO:0000318"/>
    <property type="project" value="GO_Central"/>
</dbReference>
<dbReference type="GO" id="GO:0031145">
    <property type="term" value="P:anaphase-promoting complex-dependent catabolic process"/>
    <property type="evidence" value="ECO:0000318"/>
    <property type="project" value="GO_Central"/>
</dbReference>
<dbReference type="GO" id="GO:0051301">
    <property type="term" value="P:cell division"/>
    <property type="evidence" value="ECO:0007669"/>
    <property type="project" value="UniProtKB-KW"/>
</dbReference>
<dbReference type="GO" id="GO:0007091">
    <property type="term" value="P:metaphase/anaphase transition of mitotic cell cycle"/>
    <property type="evidence" value="ECO:0000318"/>
    <property type="project" value="GO_Central"/>
</dbReference>
<dbReference type="GO" id="GO:0070979">
    <property type="term" value="P:protein K11-linked ubiquitination"/>
    <property type="evidence" value="ECO:0000318"/>
    <property type="project" value="GO_Central"/>
</dbReference>
<dbReference type="FunFam" id="1.25.10.10:FF:000217">
    <property type="entry name" value="20S cyclosome subunit (APC1/BimE)"/>
    <property type="match status" value="1"/>
</dbReference>
<dbReference type="FunFam" id="1.25.10.10:FF:000400">
    <property type="entry name" value="20S cyclosome subunit (APC1/BimE), putative"/>
    <property type="match status" value="1"/>
</dbReference>
<dbReference type="Gene3D" id="1.25.10.10">
    <property type="entry name" value="Leucine-rich Repeat Variant"/>
    <property type="match status" value="3"/>
</dbReference>
<dbReference type="InterPro" id="IPR024990">
    <property type="entry name" value="Apc1"/>
</dbReference>
<dbReference type="InterPro" id="IPR048971">
    <property type="entry name" value="Apc1_3rd"/>
</dbReference>
<dbReference type="InterPro" id="IPR049255">
    <property type="entry name" value="Apc1_N"/>
</dbReference>
<dbReference type="InterPro" id="IPR011989">
    <property type="entry name" value="ARM-like"/>
</dbReference>
<dbReference type="PANTHER" id="PTHR12827:SF3">
    <property type="entry name" value="ANAPHASE-PROMOTING COMPLEX SUBUNIT 1"/>
    <property type="match status" value="1"/>
</dbReference>
<dbReference type="PANTHER" id="PTHR12827">
    <property type="entry name" value="MEIOTIC CHECKPOINT REGULATOR TSG24 FAMILY MEMBER"/>
    <property type="match status" value="1"/>
</dbReference>
<dbReference type="Pfam" id="PF12859">
    <property type="entry name" value="ANAPC1"/>
    <property type="match status" value="1"/>
</dbReference>
<dbReference type="Pfam" id="PF21282">
    <property type="entry name" value="APC1_3rd"/>
    <property type="match status" value="1"/>
</dbReference>
<reference key="1">
    <citation type="journal article" date="1990" name="J. Biol. Chem.">
        <title>A negative regulator of mitosis in Aspergillus is a putative membrane-spanning protein.</title>
        <authorList>
            <person name="Engle D.B."/>
            <person name="Osmani S.A."/>
            <person name="Osmani A.H."/>
            <person name="Rosborough S."/>
            <person name="Xiang X."/>
            <person name="Morris N.R."/>
        </authorList>
    </citation>
    <scope>NUCLEOTIDE SEQUENCE [MRNA]</scope>
</reference>
<reference key="2">
    <citation type="journal article" date="2005" name="Nature">
        <title>Sequencing of Aspergillus nidulans and comparative analysis with A. fumigatus and A. oryzae.</title>
        <authorList>
            <person name="Galagan J.E."/>
            <person name="Calvo S.E."/>
            <person name="Cuomo C."/>
            <person name="Ma L.-J."/>
            <person name="Wortman J.R."/>
            <person name="Batzoglou S."/>
            <person name="Lee S.-I."/>
            <person name="Bastuerkmen M."/>
            <person name="Spevak C.C."/>
            <person name="Clutterbuck J."/>
            <person name="Kapitonov V."/>
            <person name="Jurka J."/>
            <person name="Scazzocchio C."/>
            <person name="Farman M.L."/>
            <person name="Butler J."/>
            <person name="Purcell S."/>
            <person name="Harris S."/>
            <person name="Braus G.H."/>
            <person name="Draht O."/>
            <person name="Busch S."/>
            <person name="D'Enfert C."/>
            <person name="Bouchier C."/>
            <person name="Goldman G.H."/>
            <person name="Bell-Pedersen D."/>
            <person name="Griffiths-Jones S."/>
            <person name="Doonan J.H."/>
            <person name="Yu J."/>
            <person name="Vienken K."/>
            <person name="Pain A."/>
            <person name="Freitag M."/>
            <person name="Selker E.U."/>
            <person name="Archer D.B."/>
            <person name="Penalva M.A."/>
            <person name="Oakley B.R."/>
            <person name="Momany M."/>
            <person name="Tanaka T."/>
            <person name="Kumagai T."/>
            <person name="Asai K."/>
            <person name="Machida M."/>
            <person name="Nierman W.C."/>
            <person name="Denning D.W."/>
            <person name="Caddick M.X."/>
            <person name="Hynes M."/>
            <person name="Paoletti M."/>
            <person name="Fischer R."/>
            <person name="Miller B.L."/>
            <person name="Dyer P.S."/>
            <person name="Sachs M.S."/>
            <person name="Osmani S.A."/>
            <person name="Birren B.W."/>
        </authorList>
    </citation>
    <scope>NUCLEOTIDE SEQUENCE [LARGE SCALE GENOMIC DNA]</scope>
    <source>
        <strain>FGSC A4 / ATCC 38163 / CBS 112.46 / NRRL 194 / M139</strain>
    </source>
</reference>
<reference key="3">
    <citation type="journal article" date="2009" name="Fungal Genet. Biol.">
        <title>The 2008 update of the Aspergillus nidulans genome annotation: a community effort.</title>
        <authorList>
            <person name="Wortman J.R."/>
            <person name="Gilsenan J.M."/>
            <person name="Joardar V."/>
            <person name="Deegan J."/>
            <person name="Clutterbuck J."/>
            <person name="Andersen M.R."/>
            <person name="Archer D."/>
            <person name="Bencina M."/>
            <person name="Braus G."/>
            <person name="Coutinho P."/>
            <person name="von Dohren H."/>
            <person name="Doonan J."/>
            <person name="Driessen A.J."/>
            <person name="Durek P."/>
            <person name="Espeso E."/>
            <person name="Fekete E."/>
            <person name="Flipphi M."/>
            <person name="Estrada C.G."/>
            <person name="Geysens S."/>
            <person name="Goldman G."/>
            <person name="de Groot P.W."/>
            <person name="Hansen K."/>
            <person name="Harris S.D."/>
            <person name="Heinekamp T."/>
            <person name="Helmstaedt K."/>
            <person name="Henrissat B."/>
            <person name="Hofmann G."/>
            <person name="Homan T."/>
            <person name="Horio T."/>
            <person name="Horiuchi H."/>
            <person name="James S."/>
            <person name="Jones M."/>
            <person name="Karaffa L."/>
            <person name="Karanyi Z."/>
            <person name="Kato M."/>
            <person name="Keller N."/>
            <person name="Kelly D.E."/>
            <person name="Kiel J.A."/>
            <person name="Kim J.M."/>
            <person name="van der Klei I.J."/>
            <person name="Klis F.M."/>
            <person name="Kovalchuk A."/>
            <person name="Krasevec N."/>
            <person name="Kubicek C.P."/>
            <person name="Liu B."/>
            <person name="Maccabe A."/>
            <person name="Meyer V."/>
            <person name="Mirabito P."/>
            <person name="Miskei M."/>
            <person name="Mos M."/>
            <person name="Mullins J."/>
            <person name="Nelson D.R."/>
            <person name="Nielsen J."/>
            <person name="Oakley B.R."/>
            <person name="Osmani S.A."/>
            <person name="Pakula T."/>
            <person name="Paszewski A."/>
            <person name="Paulsen I."/>
            <person name="Pilsyk S."/>
            <person name="Pocsi I."/>
            <person name="Punt P.J."/>
            <person name="Ram A.F."/>
            <person name="Ren Q."/>
            <person name="Robellet X."/>
            <person name="Robson G."/>
            <person name="Seiboth B."/>
            <person name="van Solingen P."/>
            <person name="Specht T."/>
            <person name="Sun J."/>
            <person name="Taheri-Talesh N."/>
            <person name="Takeshita N."/>
            <person name="Ussery D."/>
            <person name="vanKuyk P.A."/>
            <person name="Visser H."/>
            <person name="van de Vondervoort P.J."/>
            <person name="de Vries R.P."/>
            <person name="Walton J."/>
            <person name="Xiang X."/>
            <person name="Xiong Y."/>
            <person name="Zeng A.P."/>
            <person name="Brandt B.W."/>
            <person name="Cornell M.J."/>
            <person name="van den Hondel C.A."/>
            <person name="Visser J."/>
            <person name="Oliver S.G."/>
            <person name="Turner G."/>
        </authorList>
    </citation>
    <scope>GENOME REANNOTATION</scope>
    <source>
        <strain>FGSC A4 / ATCC 38163 / CBS 112.46 / NRRL 194 / M139</strain>
    </source>
</reference>
<organism>
    <name type="scientific">Emericella nidulans (strain FGSC A4 / ATCC 38163 / CBS 112.46 / NRRL 194 / M139)</name>
    <name type="common">Aspergillus nidulans</name>
    <dbReference type="NCBI Taxonomy" id="227321"/>
    <lineage>
        <taxon>Eukaryota</taxon>
        <taxon>Fungi</taxon>
        <taxon>Dikarya</taxon>
        <taxon>Ascomycota</taxon>
        <taxon>Pezizomycotina</taxon>
        <taxon>Eurotiomycetes</taxon>
        <taxon>Eurotiomycetidae</taxon>
        <taxon>Eurotiales</taxon>
        <taxon>Aspergillaceae</taxon>
        <taxon>Aspergillus</taxon>
        <taxon>Aspergillus subgen. Nidulantes</taxon>
    </lineage>
</organism>
<proteinExistence type="evidence at transcript level"/>
<keyword id="KW-0131">Cell cycle</keyword>
<keyword id="KW-0132">Cell division</keyword>
<keyword id="KW-0498">Mitosis</keyword>
<keyword id="KW-1185">Reference proteome</keyword>
<keyword id="KW-0677">Repeat</keyword>
<feature type="chain" id="PRO_0000215873" description="Negative regulator of mitosis">
    <location>
        <begin position="1"/>
        <end position="2067"/>
    </location>
</feature>
<feature type="repeat" description="PC 1">
    <location>
        <begin position="1434"/>
        <end position="1465"/>
    </location>
</feature>
<feature type="repeat" description="PC 2">
    <location>
        <begin position="1482"/>
        <end position="1520"/>
    </location>
</feature>
<feature type="repeat" description="PC 3">
    <location>
        <begin position="1532"/>
        <end position="1562"/>
    </location>
</feature>
<feature type="repeat" description="PC 4">
    <location>
        <begin position="1625"/>
        <end position="1659"/>
    </location>
</feature>
<feature type="region of interest" description="Disordered" evidence="2">
    <location>
        <begin position="100"/>
        <end position="132"/>
    </location>
</feature>
<feature type="region of interest" description="Disordered" evidence="2">
    <location>
        <begin position="332"/>
        <end position="408"/>
    </location>
</feature>
<feature type="region of interest" description="Disordered" evidence="2">
    <location>
        <begin position="452"/>
        <end position="480"/>
    </location>
</feature>
<feature type="region of interest" description="Disordered" evidence="2">
    <location>
        <begin position="2020"/>
        <end position="2042"/>
    </location>
</feature>
<feature type="short sequence motif" description="Nuclear localization signal" evidence="1">
    <location>
        <begin position="336"/>
        <end position="347"/>
    </location>
</feature>
<feature type="compositionally biased region" description="Polar residues" evidence="2">
    <location>
        <begin position="100"/>
        <end position="118"/>
    </location>
</feature>
<feature type="compositionally biased region" description="Basic residues" evidence="2">
    <location>
        <begin position="336"/>
        <end position="355"/>
    </location>
</feature>
<feature type="compositionally biased region" description="Polar residues" evidence="2">
    <location>
        <begin position="384"/>
        <end position="396"/>
    </location>
</feature>
<feature type="sequence conflict" description="In Ref. 2; EAA63206/CBF84043." evidence="3" ref="2">
    <original>F</original>
    <variation>K</variation>
    <location>
        <position position="1620"/>
    </location>
</feature>
<accession>P24686</accession>
<accession>C8VJM8</accession>
<accession>Q5B9K8</accession>
<name>BIME_EMENI</name>